<feature type="chain" id="PRO_0000273728" description="Proline/serine-rich coiled-coil protein 1">
    <location>
        <begin position="1"/>
        <end position="363"/>
    </location>
</feature>
<feature type="repeat" description="1">
    <location>
        <begin position="38"/>
        <end position="41"/>
    </location>
</feature>
<feature type="repeat" description="2">
    <location>
        <begin position="68"/>
        <end position="71"/>
    </location>
</feature>
<feature type="repeat" description="3">
    <location>
        <begin position="238"/>
        <end position="241"/>
    </location>
</feature>
<feature type="repeat" description="4">
    <location>
        <begin position="243"/>
        <end position="246"/>
    </location>
</feature>
<feature type="region of interest" description="Disordered" evidence="3">
    <location>
        <begin position="39"/>
        <end position="67"/>
    </location>
</feature>
<feature type="region of interest" description="Disordered" evidence="3">
    <location>
        <begin position="95"/>
        <end position="363"/>
    </location>
</feature>
<feature type="region of interest" description="4 X 4 AA repeats of P-X-X-P">
    <location>
        <begin position="103"/>
        <end position="246"/>
    </location>
</feature>
<feature type="coiled-coil region" evidence="2">
    <location>
        <begin position="70"/>
        <end position="94"/>
    </location>
</feature>
<feature type="compositionally biased region" description="Basic and acidic residues" evidence="3">
    <location>
        <begin position="112"/>
        <end position="124"/>
    </location>
</feature>
<feature type="compositionally biased region" description="Low complexity" evidence="3">
    <location>
        <begin position="133"/>
        <end position="148"/>
    </location>
</feature>
<feature type="compositionally biased region" description="Polar residues" evidence="3">
    <location>
        <begin position="186"/>
        <end position="196"/>
    </location>
</feature>
<feature type="compositionally biased region" description="Low complexity" evidence="3">
    <location>
        <begin position="197"/>
        <end position="210"/>
    </location>
</feature>
<feature type="modified residue" description="Phosphoserine" evidence="17">
    <location>
        <position position="22"/>
    </location>
</feature>
<feature type="modified residue" description="Phosphoserine" evidence="18">
    <location>
        <position position="47"/>
    </location>
</feature>
<feature type="modified residue" description="Phosphoserine" evidence="16">
    <location>
        <position position="65"/>
    </location>
</feature>
<feature type="modified residue" description="Phosphoserine" evidence="13 15 16 17">
    <location>
        <position position="70"/>
    </location>
</feature>
<feature type="modified residue" description="Phosphoserine" evidence="16">
    <location>
        <position position="98"/>
    </location>
</feature>
<feature type="modified residue" description="Phosphoserine" evidence="18">
    <location>
        <position position="122"/>
    </location>
</feature>
<feature type="modified residue" description="Phosphoserine" evidence="18">
    <location>
        <position position="140"/>
    </location>
</feature>
<feature type="modified residue" description="Phosphothreonine" evidence="14">
    <location>
        <position position="145"/>
    </location>
</feature>
<feature type="modified residue" description="Phosphoserine" evidence="14 16 18">
    <location>
        <position position="186"/>
    </location>
</feature>
<feature type="modified residue" description="Phosphoserine" evidence="14">
    <location>
        <position position="190"/>
    </location>
</feature>
<feature type="splice variant" id="VSP_022602" description="In isoform D." evidence="10">
    <location>
        <begin position="1"/>
        <end position="170"/>
    </location>
</feature>
<feature type="splice variant" id="VSP_022591" description="In isoform A and isoform D." evidence="8 10">
    <location>
        <begin position="213"/>
        <end position="242"/>
    </location>
</feature>
<feature type="splice variant" id="VSP_022592" description="In isoform B." evidence="9">
    <original>VSGSGEFVGLTLKFLHPSPPGPPTPIRSVLAPQPSTSNSQRLPRPQGAAAKSSSQLPIPSAIPRPASRMPLTSRSVPPGRGALPPDSLS</original>
    <variation>ACQPNATHQPECATWQRCPTSGFSVNSKRASKTKHCRTQSAGKWTQGSCFPATKSSCHGCHSQQSAAPQESGSPRTYQVKRSGQQARLQ</variation>
    <location>
        <begin position="222"/>
        <end position="310"/>
    </location>
</feature>
<feature type="splice variant" id="VSP_022593" description="In isoform B." evidence="9">
    <location>
        <begin position="311"/>
        <end position="363"/>
    </location>
</feature>
<feature type="sequence variant" id="VAR_051288" description="In dbSNP:rs34863121.">
    <original>R</original>
    <variation>Q</variation>
    <location>
        <position position="312"/>
    </location>
</feature>
<feature type="modified residue" description="Phosphoserine" evidence="12 16">
    <location sequence="Q6PGN9-2">
        <position position="212"/>
    </location>
</feature>
<feature type="modified residue" description="Phosphothreonine" evidence="12 16">
    <location sequence="Q6PGN9-2">
        <position position="215"/>
    </location>
</feature>
<feature type="modified residue" description="Phosphoserine" evidence="12 16">
    <location sequence="Q6PGN9-4">
        <position position="42"/>
    </location>
</feature>
<feature type="modified residue" description="Phosphothreonine" evidence="12 16">
    <location sequence="Q6PGN9-4">
        <position position="45"/>
    </location>
</feature>
<name>PSRC1_HUMAN</name>
<gene>
    <name type="primary">PSRC1</name>
    <name type="synonym">DDA3</name>
    <name type="ORF">FP3214</name>
</gene>
<organism>
    <name type="scientific">Homo sapiens</name>
    <name type="common">Human</name>
    <dbReference type="NCBI Taxonomy" id="9606"/>
    <lineage>
        <taxon>Eukaryota</taxon>
        <taxon>Metazoa</taxon>
        <taxon>Chordata</taxon>
        <taxon>Craniata</taxon>
        <taxon>Vertebrata</taxon>
        <taxon>Euteleostomi</taxon>
        <taxon>Mammalia</taxon>
        <taxon>Eutheria</taxon>
        <taxon>Euarchontoglires</taxon>
        <taxon>Primates</taxon>
        <taxon>Haplorrhini</taxon>
        <taxon>Catarrhini</taxon>
        <taxon>Hominidae</taxon>
        <taxon>Homo</taxon>
    </lineage>
</organism>
<sequence length="363" mass="38796">MEDLEEDVRFIVDETLDFGGLSPSDSREEEDITVLVTPEKPLRRGLSHRSDPNAVAPAPQGVRLSLGPLSPEKLEEILDEANRLAAQLEQCALQDRESAGEGLGPRRVKPSPRRETFVLKDSPVRDLLPTVNSLTRSTPSPSSLTPRLRSNDRKGSVRALRATSGKRPSNMKRESPTCNLFPASKSPASSPLTRSTPPVRGRAGPSGRAAASEETRAAKLRVSGSGEFVGLTLKFLHPSPPGPPTPIRSVLAPQPSTSNSQRLPRPQGAAAKSSSQLPIPSAIPRPASRMPLTSRSVPPGRGALPPDSLSTRKGLPRPSTAGHRVRESGHKVPVSQRLNLPVMGATRSNLQPPRKVAVPGPTR</sequence>
<reference key="1">
    <citation type="journal article" date="2002" name="Biochim. Biophys. Acta">
        <title>Cloning and characterization of human and mouse DDA3 genes.</title>
        <authorList>
            <person name="Lo P.-K."/>
            <person name="Wang F.-F."/>
        </authorList>
    </citation>
    <scope>NUCLEOTIDE SEQUENCE [GENOMIC DNA / MRNA] (ISOFORM A)</scope>
    <scope>SUBCELLULAR LOCATION</scope>
    <scope>TISSUE SPECIFICITY</scope>
    <source>
        <tissue>Fetal brain</tissue>
    </source>
</reference>
<reference key="2">
    <citation type="journal article" date="2004" name="Nat. Genet.">
        <title>Complete sequencing and characterization of 21,243 full-length human cDNAs.</title>
        <authorList>
            <person name="Ota T."/>
            <person name="Suzuki Y."/>
            <person name="Nishikawa T."/>
            <person name="Otsuki T."/>
            <person name="Sugiyama T."/>
            <person name="Irie R."/>
            <person name="Wakamatsu A."/>
            <person name="Hayashi K."/>
            <person name="Sato H."/>
            <person name="Nagai K."/>
            <person name="Kimura K."/>
            <person name="Makita H."/>
            <person name="Sekine M."/>
            <person name="Obayashi M."/>
            <person name="Nishi T."/>
            <person name="Shibahara T."/>
            <person name="Tanaka T."/>
            <person name="Ishii S."/>
            <person name="Yamamoto J."/>
            <person name="Saito K."/>
            <person name="Kawai Y."/>
            <person name="Isono Y."/>
            <person name="Nakamura Y."/>
            <person name="Nagahari K."/>
            <person name="Murakami K."/>
            <person name="Yasuda T."/>
            <person name="Iwayanagi T."/>
            <person name="Wagatsuma M."/>
            <person name="Shiratori A."/>
            <person name="Sudo H."/>
            <person name="Hosoiri T."/>
            <person name="Kaku Y."/>
            <person name="Kodaira H."/>
            <person name="Kondo H."/>
            <person name="Sugawara M."/>
            <person name="Takahashi M."/>
            <person name="Kanda K."/>
            <person name="Yokoi T."/>
            <person name="Furuya T."/>
            <person name="Kikkawa E."/>
            <person name="Omura Y."/>
            <person name="Abe K."/>
            <person name="Kamihara K."/>
            <person name="Katsuta N."/>
            <person name="Sato K."/>
            <person name="Tanikawa M."/>
            <person name="Yamazaki M."/>
            <person name="Ninomiya K."/>
            <person name="Ishibashi T."/>
            <person name="Yamashita H."/>
            <person name="Murakawa K."/>
            <person name="Fujimori K."/>
            <person name="Tanai H."/>
            <person name="Kimata M."/>
            <person name="Watanabe M."/>
            <person name="Hiraoka S."/>
            <person name="Chiba Y."/>
            <person name="Ishida S."/>
            <person name="Ono Y."/>
            <person name="Takiguchi S."/>
            <person name="Watanabe S."/>
            <person name="Yosida M."/>
            <person name="Hotuta T."/>
            <person name="Kusano J."/>
            <person name="Kanehori K."/>
            <person name="Takahashi-Fujii A."/>
            <person name="Hara H."/>
            <person name="Tanase T.-O."/>
            <person name="Nomura Y."/>
            <person name="Togiya S."/>
            <person name="Komai F."/>
            <person name="Hara R."/>
            <person name="Takeuchi K."/>
            <person name="Arita M."/>
            <person name="Imose N."/>
            <person name="Musashino K."/>
            <person name="Yuuki H."/>
            <person name="Oshima A."/>
            <person name="Sasaki N."/>
            <person name="Aotsuka S."/>
            <person name="Yoshikawa Y."/>
            <person name="Matsunawa H."/>
            <person name="Ichihara T."/>
            <person name="Shiohata N."/>
            <person name="Sano S."/>
            <person name="Moriya S."/>
            <person name="Momiyama H."/>
            <person name="Satoh N."/>
            <person name="Takami S."/>
            <person name="Terashima Y."/>
            <person name="Suzuki O."/>
            <person name="Nakagawa S."/>
            <person name="Senoh A."/>
            <person name="Mizoguchi H."/>
            <person name="Goto Y."/>
            <person name="Shimizu F."/>
            <person name="Wakebe H."/>
            <person name="Hishigaki H."/>
            <person name="Watanabe T."/>
            <person name="Sugiyama A."/>
            <person name="Takemoto M."/>
            <person name="Kawakami B."/>
            <person name="Yamazaki M."/>
            <person name="Watanabe K."/>
            <person name="Kumagai A."/>
            <person name="Itakura S."/>
            <person name="Fukuzumi Y."/>
            <person name="Fujimori Y."/>
            <person name="Komiyama M."/>
            <person name="Tashiro H."/>
            <person name="Tanigami A."/>
            <person name="Fujiwara T."/>
            <person name="Ono T."/>
            <person name="Yamada K."/>
            <person name="Fujii Y."/>
            <person name="Ozaki K."/>
            <person name="Hirao M."/>
            <person name="Ohmori Y."/>
            <person name="Kawabata A."/>
            <person name="Hikiji T."/>
            <person name="Kobatake N."/>
            <person name="Inagaki H."/>
            <person name="Ikema Y."/>
            <person name="Okamoto S."/>
            <person name="Okitani R."/>
            <person name="Kawakami T."/>
            <person name="Noguchi S."/>
            <person name="Itoh T."/>
            <person name="Shigeta K."/>
            <person name="Senba T."/>
            <person name="Matsumura K."/>
            <person name="Nakajima Y."/>
            <person name="Mizuno T."/>
            <person name="Morinaga M."/>
            <person name="Sasaki M."/>
            <person name="Togashi T."/>
            <person name="Oyama M."/>
            <person name="Hata H."/>
            <person name="Watanabe M."/>
            <person name="Komatsu T."/>
            <person name="Mizushima-Sugano J."/>
            <person name="Satoh T."/>
            <person name="Shirai Y."/>
            <person name="Takahashi Y."/>
            <person name="Nakagawa K."/>
            <person name="Okumura K."/>
            <person name="Nagase T."/>
            <person name="Nomura N."/>
            <person name="Kikuchi H."/>
            <person name="Masuho Y."/>
            <person name="Yamashita R."/>
            <person name="Nakai K."/>
            <person name="Yada T."/>
            <person name="Nakamura Y."/>
            <person name="Ohara O."/>
            <person name="Isogai T."/>
            <person name="Sugano S."/>
        </authorList>
    </citation>
    <scope>NUCLEOTIDE SEQUENCE [LARGE SCALE MRNA] (ISOFORM B)</scope>
    <source>
        <tissue>Cerebellum</tissue>
    </source>
</reference>
<reference key="3">
    <citation type="journal article" date="2004" name="Proc. Natl. Acad. Sci. U.S.A.">
        <title>Large-scale cDNA transfection screening for genes related to cancer development and progression.</title>
        <authorList>
            <person name="Wan D."/>
            <person name="Gong Y."/>
            <person name="Qin W."/>
            <person name="Zhang P."/>
            <person name="Li J."/>
            <person name="Wei L."/>
            <person name="Zhou X."/>
            <person name="Li H."/>
            <person name="Qiu X."/>
            <person name="Zhong F."/>
            <person name="He L."/>
            <person name="Yu J."/>
            <person name="Yao G."/>
            <person name="Jiang H."/>
            <person name="Qian L."/>
            <person name="Yu Y."/>
            <person name="Shu H."/>
            <person name="Chen X."/>
            <person name="Xu H."/>
            <person name="Guo M."/>
            <person name="Pan Z."/>
            <person name="Chen Y."/>
            <person name="Ge C."/>
            <person name="Yang S."/>
            <person name="Gu J."/>
        </authorList>
    </citation>
    <scope>NUCLEOTIDE SEQUENCE [LARGE SCALE MRNA] (ISOFORM D)</scope>
</reference>
<reference key="4">
    <citation type="journal article" date="2006" name="Nature">
        <title>The DNA sequence and biological annotation of human chromosome 1.</title>
        <authorList>
            <person name="Gregory S.G."/>
            <person name="Barlow K.F."/>
            <person name="McLay K.E."/>
            <person name="Kaul R."/>
            <person name="Swarbreck D."/>
            <person name="Dunham A."/>
            <person name="Scott C.E."/>
            <person name="Howe K.L."/>
            <person name="Woodfine K."/>
            <person name="Spencer C.C.A."/>
            <person name="Jones M.C."/>
            <person name="Gillson C."/>
            <person name="Searle S."/>
            <person name="Zhou Y."/>
            <person name="Kokocinski F."/>
            <person name="McDonald L."/>
            <person name="Evans R."/>
            <person name="Phillips K."/>
            <person name="Atkinson A."/>
            <person name="Cooper R."/>
            <person name="Jones C."/>
            <person name="Hall R.E."/>
            <person name="Andrews T.D."/>
            <person name="Lloyd C."/>
            <person name="Ainscough R."/>
            <person name="Almeida J.P."/>
            <person name="Ambrose K.D."/>
            <person name="Anderson F."/>
            <person name="Andrew R.W."/>
            <person name="Ashwell R.I.S."/>
            <person name="Aubin K."/>
            <person name="Babbage A.K."/>
            <person name="Bagguley C.L."/>
            <person name="Bailey J."/>
            <person name="Beasley H."/>
            <person name="Bethel G."/>
            <person name="Bird C.P."/>
            <person name="Bray-Allen S."/>
            <person name="Brown J.Y."/>
            <person name="Brown A.J."/>
            <person name="Buckley D."/>
            <person name="Burton J."/>
            <person name="Bye J."/>
            <person name="Carder C."/>
            <person name="Chapman J.C."/>
            <person name="Clark S.Y."/>
            <person name="Clarke G."/>
            <person name="Clee C."/>
            <person name="Cobley V."/>
            <person name="Collier R.E."/>
            <person name="Corby N."/>
            <person name="Coville G.J."/>
            <person name="Davies J."/>
            <person name="Deadman R."/>
            <person name="Dunn M."/>
            <person name="Earthrowl M."/>
            <person name="Ellington A.G."/>
            <person name="Errington H."/>
            <person name="Frankish A."/>
            <person name="Frankland J."/>
            <person name="French L."/>
            <person name="Garner P."/>
            <person name="Garnett J."/>
            <person name="Gay L."/>
            <person name="Ghori M.R.J."/>
            <person name="Gibson R."/>
            <person name="Gilby L.M."/>
            <person name="Gillett W."/>
            <person name="Glithero R.J."/>
            <person name="Grafham D.V."/>
            <person name="Griffiths C."/>
            <person name="Griffiths-Jones S."/>
            <person name="Grocock R."/>
            <person name="Hammond S."/>
            <person name="Harrison E.S.I."/>
            <person name="Hart E."/>
            <person name="Haugen E."/>
            <person name="Heath P.D."/>
            <person name="Holmes S."/>
            <person name="Holt K."/>
            <person name="Howden P.J."/>
            <person name="Hunt A.R."/>
            <person name="Hunt S.E."/>
            <person name="Hunter G."/>
            <person name="Isherwood J."/>
            <person name="James R."/>
            <person name="Johnson C."/>
            <person name="Johnson D."/>
            <person name="Joy A."/>
            <person name="Kay M."/>
            <person name="Kershaw J.K."/>
            <person name="Kibukawa M."/>
            <person name="Kimberley A.M."/>
            <person name="King A."/>
            <person name="Knights A.J."/>
            <person name="Lad H."/>
            <person name="Laird G."/>
            <person name="Lawlor S."/>
            <person name="Leongamornlert D.A."/>
            <person name="Lloyd D.M."/>
            <person name="Loveland J."/>
            <person name="Lovell J."/>
            <person name="Lush M.J."/>
            <person name="Lyne R."/>
            <person name="Martin S."/>
            <person name="Mashreghi-Mohammadi M."/>
            <person name="Matthews L."/>
            <person name="Matthews N.S.W."/>
            <person name="McLaren S."/>
            <person name="Milne S."/>
            <person name="Mistry S."/>
            <person name="Moore M.J.F."/>
            <person name="Nickerson T."/>
            <person name="O'Dell C.N."/>
            <person name="Oliver K."/>
            <person name="Palmeiri A."/>
            <person name="Palmer S.A."/>
            <person name="Parker A."/>
            <person name="Patel D."/>
            <person name="Pearce A.V."/>
            <person name="Peck A.I."/>
            <person name="Pelan S."/>
            <person name="Phelps K."/>
            <person name="Phillimore B.J."/>
            <person name="Plumb R."/>
            <person name="Rajan J."/>
            <person name="Raymond C."/>
            <person name="Rouse G."/>
            <person name="Saenphimmachak C."/>
            <person name="Sehra H.K."/>
            <person name="Sheridan E."/>
            <person name="Shownkeen R."/>
            <person name="Sims S."/>
            <person name="Skuce C.D."/>
            <person name="Smith M."/>
            <person name="Steward C."/>
            <person name="Subramanian S."/>
            <person name="Sycamore N."/>
            <person name="Tracey A."/>
            <person name="Tromans A."/>
            <person name="Van Helmond Z."/>
            <person name="Wall M."/>
            <person name="Wallis J.M."/>
            <person name="White S."/>
            <person name="Whitehead S.L."/>
            <person name="Wilkinson J.E."/>
            <person name="Willey D.L."/>
            <person name="Williams H."/>
            <person name="Wilming L."/>
            <person name="Wray P.W."/>
            <person name="Wu Z."/>
            <person name="Coulson A."/>
            <person name="Vaudin M."/>
            <person name="Sulston J.E."/>
            <person name="Durbin R.M."/>
            <person name="Hubbard T."/>
            <person name="Wooster R."/>
            <person name="Dunham I."/>
            <person name="Carter N.P."/>
            <person name="McVean G."/>
            <person name="Ross M.T."/>
            <person name="Harrow J."/>
            <person name="Olson M.V."/>
            <person name="Beck S."/>
            <person name="Rogers J."/>
            <person name="Bentley D.R."/>
        </authorList>
    </citation>
    <scope>NUCLEOTIDE SEQUENCE [LARGE SCALE GENOMIC DNA] (ISOFORMS A AND B)</scope>
</reference>
<reference key="5">
    <citation type="submission" date="2005-07" db="EMBL/GenBank/DDBJ databases">
        <authorList>
            <person name="Mural R.J."/>
            <person name="Istrail S."/>
            <person name="Sutton G.G."/>
            <person name="Florea L."/>
            <person name="Halpern A.L."/>
            <person name="Mobarry C.M."/>
            <person name="Lippert R."/>
            <person name="Walenz B."/>
            <person name="Shatkay H."/>
            <person name="Dew I."/>
            <person name="Miller J.R."/>
            <person name="Flanigan M.J."/>
            <person name="Edwards N.J."/>
            <person name="Bolanos R."/>
            <person name="Fasulo D."/>
            <person name="Halldorsson B.V."/>
            <person name="Hannenhalli S."/>
            <person name="Turner R."/>
            <person name="Yooseph S."/>
            <person name="Lu F."/>
            <person name="Nusskern D.R."/>
            <person name="Shue B.C."/>
            <person name="Zheng X.H."/>
            <person name="Zhong F."/>
            <person name="Delcher A.L."/>
            <person name="Huson D.H."/>
            <person name="Kravitz S.A."/>
            <person name="Mouchard L."/>
            <person name="Reinert K."/>
            <person name="Remington K.A."/>
            <person name="Clark A.G."/>
            <person name="Waterman M.S."/>
            <person name="Eichler E.E."/>
            <person name="Adams M.D."/>
            <person name="Hunkapiller M.W."/>
            <person name="Myers E.W."/>
            <person name="Venter J.C."/>
        </authorList>
    </citation>
    <scope>NUCLEOTIDE SEQUENCE [LARGE SCALE GENOMIC DNA]</scope>
</reference>
<reference key="6">
    <citation type="journal article" date="2004" name="Genome Res.">
        <title>The status, quality, and expansion of the NIH full-length cDNA project: the Mammalian Gene Collection (MGC).</title>
        <authorList>
            <consortium name="The MGC Project Team"/>
        </authorList>
    </citation>
    <scope>NUCLEOTIDE SEQUENCE [LARGE SCALE MRNA] (ISOFORM C)</scope>
    <source>
        <tissue>Skin</tissue>
    </source>
</reference>
<reference key="7">
    <citation type="journal article" date="2006" name="Nat. Biotechnol.">
        <title>A probability-based approach for high-throughput protein phosphorylation analysis and site localization.</title>
        <authorList>
            <person name="Beausoleil S.A."/>
            <person name="Villen J."/>
            <person name="Gerber S.A."/>
            <person name="Rush J."/>
            <person name="Gygi S.P."/>
        </authorList>
    </citation>
    <scope>PHOSPHORYLATION [LARGE SCALE ANALYSIS] AT SER-212 AND THR-215 (ISOFORM A)</scope>
    <scope>PHOSPHORYLATION [LARGE SCALE ANALYSIS] AT SER-42 AND THR-45 (ISOFORM D)</scope>
    <scope>IDENTIFICATION BY MASS SPECTROMETRY [LARGE SCALE ANALYSIS]</scope>
    <source>
        <tissue>Cervix carcinoma</tissue>
    </source>
</reference>
<reference key="8">
    <citation type="journal article" date="2008" name="J. Cell Biol.">
        <title>DDA3 recruits microtubule depolymerase Kif2a to spindle poles and controls spindle dynamics and mitotic chromosome movement.</title>
        <authorList>
            <person name="Jang C.Y."/>
            <person name="Wong J."/>
            <person name="Coppinger J.A."/>
            <person name="Seki A."/>
            <person name="Yates J.R. III"/>
            <person name="Fang G."/>
        </authorList>
    </citation>
    <scope>FUNCTION</scope>
    <scope>PHOSPHORYLATION</scope>
    <scope>INTERACTION WITH KIF2A</scope>
    <scope>SUBCELLULAR LOCATION</scope>
    <scope>IDENTIFICATION BY MASS SPECTROMETRY</scope>
</reference>
<reference key="9">
    <citation type="journal article" date="2008" name="J. Proteome Res.">
        <title>Combining protein-based IMAC, peptide-based IMAC, and MudPIT for efficient phosphoproteomic analysis.</title>
        <authorList>
            <person name="Cantin G.T."/>
            <person name="Yi W."/>
            <person name="Lu B."/>
            <person name="Park S.K."/>
            <person name="Xu T."/>
            <person name="Lee J.-D."/>
            <person name="Yates J.R. III"/>
        </authorList>
    </citation>
    <scope>PHOSPHORYLATION [LARGE SCALE ANALYSIS] AT SER-70</scope>
    <scope>IDENTIFICATION BY MASS SPECTROMETRY [LARGE SCALE ANALYSIS]</scope>
    <source>
        <tissue>Cervix carcinoma</tissue>
    </source>
</reference>
<reference key="10">
    <citation type="journal article" date="2008" name="Proc. Natl. Acad. Sci. U.S.A.">
        <title>A quantitative atlas of mitotic phosphorylation.</title>
        <authorList>
            <person name="Dephoure N."/>
            <person name="Zhou C."/>
            <person name="Villen J."/>
            <person name="Beausoleil S.A."/>
            <person name="Bakalarski C.E."/>
            <person name="Elledge S.J."/>
            <person name="Gygi S.P."/>
        </authorList>
    </citation>
    <scope>PHOSPHORYLATION [LARGE SCALE ANALYSIS] AT THR-145; SER-186 AND SER-190</scope>
    <scope>IDENTIFICATION BY MASS SPECTROMETRY [LARGE SCALE ANALYSIS]</scope>
    <source>
        <tissue>Cervix carcinoma</tissue>
    </source>
</reference>
<reference key="11">
    <citation type="journal article" date="2009" name="Cell Cycle">
        <title>The N-terminal domain of DDA3 regulates the spindle-association of the microtubule depolymerase Kif2a and controls the mitotic function of DDA3.</title>
        <authorList>
            <person name="Jang C.Y."/>
            <person name="Fang G."/>
        </authorList>
    </citation>
    <scope>FUNCTION</scope>
    <scope>SUBCELLULAR LOCATION</scope>
</reference>
<reference key="12">
    <citation type="journal article" date="2009" name="Sci. Signal.">
        <title>Quantitative phosphoproteomic analysis of T cell receptor signaling reveals system-wide modulation of protein-protein interactions.</title>
        <authorList>
            <person name="Mayya V."/>
            <person name="Lundgren D.H."/>
            <person name="Hwang S.-I."/>
            <person name="Rezaul K."/>
            <person name="Wu L."/>
            <person name="Eng J.K."/>
            <person name="Rodionov V."/>
            <person name="Han D.K."/>
        </authorList>
    </citation>
    <scope>PHOSPHORYLATION [LARGE SCALE ANALYSIS] AT SER-70</scope>
    <scope>IDENTIFICATION BY MASS SPECTROMETRY [LARGE SCALE ANALYSIS]</scope>
    <source>
        <tissue>Leukemic T-cell</tissue>
    </source>
</reference>
<reference key="13">
    <citation type="journal article" date="2010" name="Sci. Signal.">
        <title>Quantitative phosphoproteomics reveals widespread full phosphorylation site occupancy during mitosis.</title>
        <authorList>
            <person name="Olsen J.V."/>
            <person name="Vermeulen M."/>
            <person name="Santamaria A."/>
            <person name="Kumar C."/>
            <person name="Miller M.L."/>
            <person name="Jensen L.J."/>
            <person name="Gnad F."/>
            <person name="Cox J."/>
            <person name="Jensen T.S."/>
            <person name="Nigg E.A."/>
            <person name="Brunak S."/>
            <person name="Mann M."/>
        </authorList>
    </citation>
    <scope>PHOSPHORYLATION [LARGE SCALE ANALYSIS] AT SER-65; SER-70; SER-98 AND SER-186</scope>
    <scope>PHOSPHORYLATION [LARGE SCALE ANALYSIS] AT SER-212 AND THR-215 (ISOFORM A)</scope>
    <scope>PHOSPHORYLATION [LARGE SCALE ANALYSIS] AT SER-42 AND THR-45 (ISOFORM D)</scope>
    <scope>IDENTIFICATION BY MASS SPECTROMETRY [LARGE SCALE ANALYSIS]</scope>
    <source>
        <tissue>Cervix carcinoma</tissue>
    </source>
</reference>
<reference key="14">
    <citation type="journal article" date="2011" name="Sci. Signal.">
        <title>System-wide temporal characterization of the proteome and phosphoproteome of human embryonic stem cell differentiation.</title>
        <authorList>
            <person name="Rigbolt K.T."/>
            <person name="Prokhorova T.A."/>
            <person name="Akimov V."/>
            <person name="Henningsen J."/>
            <person name="Johansen P.T."/>
            <person name="Kratchmarova I."/>
            <person name="Kassem M."/>
            <person name="Mann M."/>
            <person name="Olsen J.V."/>
            <person name="Blagoev B."/>
        </authorList>
    </citation>
    <scope>PHOSPHORYLATION [LARGE SCALE ANALYSIS] AT SER-22 AND SER-70</scope>
    <scope>IDENTIFICATION BY MASS SPECTROMETRY [LARGE SCALE ANALYSIS]</scope>
</reference>
<reference key="15">
    <citation type="journal article" date="2012" name="Proc. Natl. Acad. Sci. U.S.A.">
        <title>N-terminal acetylome analyses and functional insights of the N-terminal acetyltransferase NatB.</title>
        <authorList>
            <person name="Van Damme P."/>
            <person name="Lasa M."/>
            <person name="Polevoda B."/>
            <person name="Gazquez C."/>
            <person name="Elosegui-Artola A."/>
            <person name="Kim D.S."/>
            <person name="De Juan-Pardo E."/>
            <person name="Demeyer K."/>
            <person name="Hole K."/>
            <person name="Larrea E."/>
            <person name="Timmerman E."/>
            <person name="Prieto J."/>
            <person name="Arnesen T."/>
            <person name="Sherman F."/>
            <person name="Gevaert K."/>
            <person name="Aldabe R."/>
        </authorList>
    </citation>
    <scope>IDENTIFICATION BY MASS SPECTROMETRY [LARGE SCALE ANALYSIS]</scope>
</reference>
<reference key="16">
    <citation type="journal article" date="2013" name="J. Proteome Res.">
        <title>Toward a comprehensive characterization of a human cancer cell phosphoproteome.</title>
        <authorList>
            <person name="Zhou H."/>
            <person name="Di Palma S."/>
            <person name="Preisinger C."/>
            <person name="Peng M."/>
            <person name="Polat A.N."/>
            <person name="Heck A.J."/>
            <person name="Mohammed S."/>
        </authorList>
    </citation>
    <scope>PHOSPHORYLATION [LARGE SCALE ANALYSIS] AT SER-47; SER-122; SER-140 AND SER-186</scope>
    <scope>IDENTIFICATION BY MASS SPECTROMETRY [LARGE SCALE ANALYSIS]</scope>
    <source>
        <tissue>Cervix carcinoma</tissue>
        <tissue>Erythroleukemia</tissue>
    </source>
</reference>
<reference key="17">
    <citation type="journal article" date="2016" name="Biochem. Biophys. Res. Commun.">
        <title>ANKRD53 interacts with DDA3 and regulates chromosome integrity during mitosis.</title>
        <authorList>
            <person name="Kim S."/>
            <person name="Jang C.Y."/>
        </authorList>
    </citation>
    <scope>INTERACTION WITH ANKRD53</scope>
    <scope>FUNCTION</scope>
</reference>
<evidence type="ECO:0000250" key="1">
    <source>
        <dbReference type="UniProtKB" id="Q9D0P7"/>
    </source>
</evidence>
<evidence type="ECO:0000255" key="2"/>
<evidence type="ECO:0000256" key="3">
    <source>
        <dbReference type="SAM" id="MobiDB-lite"/>
    </source>
</evidence>
<evidence type="ECO:0000269" key="4">
    <source>
    </source>
</evidence>
<evidence type="ECO:0000269" key="5">
    <source>
    </source>
</evidence>
<evidence type="ECO:0000269" key="6">
    <source>
    </source>
</evidence>
<evidence type="ECO:0000269" key="7">
    <source>
    </source>
</evidence>
<evidence type="ECO:0000303" key="8">
    <source>
    </source>
</evidence>
<evidence type="ECO:0000303" key="9">
    <source>
    </source>
</evidence>
<evidence type="ECO:0000303" key="10">
    <source>
    </source>
</evidence>
<evidence type="ECO:0000305" key="11"/>
<evidence type="ECO:0007744" key="12">
    <source>
    </source>
</evidence>
<evidence type="ECO:0007744" key="13">
    <source>
    </source>
</evidence>
<evidence type="ECO:0007744" key="14">
    <source>
    </source>
</evidence>
<evidence type="ECO:0007744" key="15">
    <source>
    </source>
</evidence>
<evidence type="ECO:0007744" key="16">
    <source>
    </source>
</evidence>
<evidence type="ECO:0007744" key="17">
    <source>
    </source>
</evidence>
<evidence type="ECO:0007744" key="18">
    <source>
    </source>
</evidence>
<dbReference type="EMBL" id="AF223000">
    <property type="protein sequence ID" value="AAN73431.1"/>
    <property type="molecule type" value="mRNA"/>
</dbReference>
<dbReference type="EMBL" id="AF322891">
    <property type="protein sequence ID" value="AAN73434.1"/>
    <property type="molecule type" value="Genomic_DNA"/>
</dbReference>
<dbReference type="EMBL" id="AK126567">
    <property type="protein sequence ID" value="BAC86599.1"/>
    <property type="molecule type" value="mRNA"/>
</dbReference>
<dbReference type="EMBL" id="AF447874">
    <property type="protein sequence ID" value="AAQ04649.1"/>
    <property type="molecule type" value="mRNA"/>
</dbReference>
<dbReference type="EMBL" id="AL390252">
    <property type="status" value="NOT_ANNOTATED_CDS"/>
    <property type="molecule type" value="Genomic_DNA"/>
</dbReference>
<dbReference type="EMBL" id="CH471122">
    <property type="protein sequence ID" value="EAW56373.1"/>
    <property type="molecule type" value="Genomic_DNA"/>
</dbReference>
<dbReference type="EMBL" id="BC056909">
    <property type="protein sequence ID" value="AAH56909.1"/>
    <property type="molecule type" value="mRNA"/>
</dbReference>
<dbReference type="CCDS" id="CCDS30791.1">
    <molecule id="Q6PGN9-3"/>
</dbReference>
<dbReference type="CCDS" id="CCDS30792.1">
    <molecule id="Q6PGN9-1"/>
</dbReference>
<dbReference type="CCDS" id="CCDS797.1">
    <molecule id="Q6PGN9-2"/>
</dbReference>
<dbReference type="RefSeq" id="NP_001005290.1">
    <molecule id="Q6PGN9-3"/>
    <property type="nucleotide sequence ID" value="NM_001005290.4"/>
</dbReference>
<dbReference type="RefSeq" id="NP_001027462.1">
    <molecule id="Q6PGN9-2"/>
    <property type="nucleotide sequence ID" value="NM_001032291.3"/>
</dbReference>
<dbReference type="RefSeq" id="NP_001350238.1">
    <molecule id="Q6PGN9-1"/>
    <property type="nucleotide sequence ID" value="NM_001363309.2"/>
</dbReference>
<dbReference type="RefSeq" id="NP_001380931.1">
    <molecule id="Q6PGN9-2"/>
    <property type="nucleotide sequence ID" value="NM_001394002.1"/>
</dbReference>
<dbReference type="RefSeq" id="NP_001380932.1">
    <molecule id="Q6PGN9-3"/>
    <property type="nucleotide sequence ID" value="NM_001394003.1"/>
</dbReference>
<dbReference type="RefSeq" id="NP_001380933.1">
    <molecule id="Q6PGN9-3"/>
    <property type="nucleotide sequence ID" value="NM_001394004.1"/>
</dbReference>
<dbReference type="RefSeq" id="NP_001380934.1">
    <molecule id="Q6PGN9-1"/>
    <property type="nucleotide sequence ID" value="NM_001394005.1"/>
</dbReference>
<dbReference type="RefSeq" id="NP_116025.1">
    <molecule id="Q6PGN9-2"/>
    <property type="nucleotide sequence ID" value="NM_032636.8"/>
</dbReference>
<dbReference type="RefSeq" id="XP_005271340.1">
    <molecule id="Q6PGN9-2"/>
    <property type="nucleotide sequence ID" value="XM_005271283.4"/>
</dbReference>
<dbReference type="RefSeq" id="XP_016858049.1">
    <molecule id="Q6PGN9-1"/>
    <property type="nucleotide sequence ID" value="XM_017002560.3"/>
</dbReference>
<dbReference type="RefSeq" id="XP_016858050.1">
    <property type="nucleotide sequence ID" value="XM_017002561.1"/>
</dbReference>
<dbReference type="RefSeq" id="XP_016858051.1">
    <molecule id="Q6PGN9-1"/>
    <property type="nucleotide sequence ID" value="XM_017002562.2"/>
</dbReference>
<dbReference type="RefSeq" id="XP_016858052.1">
    <molecule id="Q6PGN9-1"/>
    <property type="nucleotide sequence ID" value="XM_017002563.2"/>
</dbReference>
<dbReference type="RefSeq" id="XP_016858053.1">
    <molecule id="Q6PGN9-1"/>
    <property type="nucleotide sequence ID" value="XM_017002564.2"/>
</dbReference>
<dbReference type="RefSeq" id="XP_016858054.1">
    <property type="nucleotide sequence ID" value="XM_017002565.1"/>
</dbReference>
<dbReference type="RefSeq" id="XP_016858055.1">
    <molecule id="Q6PGN9-1"/>
    <property type="nucleotide sequence ID" value="XM_017002566.2"/>
</dbReference>
<dbReference type="RefSeq" id="XP_016858056.1">
    <molecule id="Q6PGN9-1"/>
    <property type="nucleotide sequence ID" value="XM_017002567.2"/>
</dbReference>
<dbReference type="RefSeq" id="XP_016858057.1">
    <property type="nucleotide sequence ID" value="XM_017002568.1"/>
</dbReference>
<dbReference type="RefSeq" id="XP_016858058.1">
    <molecule id="Q6PGN9-2"/>
    <property type="nucleotide sequence ID" value="XM_017002569.2"/>
</dbReference>
<dbReference type="RefSeq" id="XP_016858059.1">
    <molecule id="Q6PGN9-2"/>
    <property type="nucleotide sequence ID" value="XM_017002570.2"/>
</dbReference>
<dbReference type="RefSeq" id="XP_016858065.1">
    <property type="nucleotide sequence ID" value="XM_017002576.1"/>
</dbReference>
<dbReference type="RefSeq" id="XP_016858066.1">
    <property type="nucleotide sequence ID" value="XM_017002577.1"/>
</dbReference>
<dbReference type="RefSeq" id="XP_047288207.1">
    <molecule id="Q6PGN9-1"/>
    <property type="nucleotide sequence ID" value="XM_047432251.1"/>
</dbReference>
<dbReference type="RefSeq" id="XP_047288211.1">
    <molecule id="Q6PGN9-2"/>
    <property type="nucleotide sequence ID" value="XM_047432255.1"/>
</dbReference>
<dbReference type="RefSeq" id="XP_047288220.1">
    <molecule id="Q6PGN9-2"/>
    <property type="nucleotide sequence ID" value="XM_047432264.1"/>
</dbReference>
<dbReference type="RefSeq" id="XP_047288228.1">
    <molecule id="Q6PGN9-2"/>
    <property type="nucleotide sequence ID" value="XM_047432272.1"/>
</dbReference>
<dbReference type="RefSeq" id="XP_047288233.1">
    <molecule id="Q6PGN9-3"/>
    <property type="nucleotide sequence ID" value="XM_047432277.1"/>
</dbReference>
<dbReference type="RefSeq" id="XP_047288240.1">
    <molecule id="Q6PGN9-3"/>
    <property type="nucleotide sequence ID" value="XM_047432284.1"/>
</dbReference>
<dbReference type="RefSeq" id="XP_047288250.1">
    <molecule id="Q6PGN9-3"/>
    <property type="nucleotide sequence ID" value="XM_047432294.1"/>
</dbReference>
<dbReference type="RefSeq" id="XP_054195197.1">
    <molecule id="Q6PGN9-1"/>
    <property type="nucleotide sequence ID" value="XM_054339222.1"/>
</dbReference>
<dbReference type="RefSeq" id="XP_054195198.1">
    <molecule id="Q6PGN9-1"/>
    <property type="nucleotide sequence ID" value="XM_054339223.1"/>
</dbReference>
<dbReference type="RefSeq" id="XP_054195199.1">
    <molecule id="Q6PGN9-1"/>
    <property type="nucleotide sequence ID" value="XM_054339224.1"/>
</dbReference>
<dbReference type="RefSeq" id="XP_054195200.1">
    <molecule id="Q6PGN9-1"/>
    <property type="nucleotide sequence ID" value="XM_054339225.1"/>
</dbReference>
<dbReference type="RefSeq" id="XP_054195201.1">
    <molecule id="Q6PGN9-1"/>
    <property type="nucleotide sequence ID" value="XM_054339226.1"/>
</dbReference>
<dbReference type="RefSeq" id="XP_054195202.1">
    <molecule id="Q6PGN9-1"/>
    <property type="nucleotide sequence ID" value="XM_054339227.1"/>
</dbReference>
<dbReference type="RefSeq" id="XP_054195203.1">
    <molecule id="Q6PGN9-1"/>
    <property type="nucleotide sequence ID" value="XM_054339228.1"/>
</dbReference>
<dbReference type="RefSeq" id="XP_054195204.1">
    <molecule id="Q6PGN9-2"/>
    <property type="nucleotide sequence ID" value="XM_054339229.1"/>
</dbReference>
<dbReference type="RefSeq" id="XP_054195205.1">
    <molecule id="Q6PGN9-2"/>
    <property type="nucleotide sequence ID" value="XM_054339230.1"/>
</dbReference>
<dbReference type="RefSeq" id="XP_054195206.1">
    <molecule id="Q6PGN9-2"/>
    <property type="nucleotide sequence ID" value="XM_054339231.1"/>
</dbReference>
<dbReference type="RefSeq" id="XP_054195207.1">
    <molecule id="Q6PGN9-2"/>
    <property type="nucleotide sequence ID" value="XM_054339232.1"/>
</dbReference>
<dbReference type="RefSeq" id="XP_054195208.1">
    <molecule id="Q6PGN9-2"/>
    <property type="nucleotide sequence ID" value="XM_054339233.1"/>
</dbReference>
<dbReference type="RefSeq" id="XP_054195209.1">
    <molecule id="Q6PGN9-2"/>
    <property type="nucleotide sequence ID" value="XM_054339234.1"/>
</dbReference>
<dbReference type="RefSeq" id="XP_054195212.1">
    <molecule id="Q6PGN9-3"/>
    <property type="nucleotide sequence ID" value="XM_054339237.1"/>
</dbReference>
<dbReference type="RefSeq" id="XP_054195213.1">
    <molecule id="Q6PGN9-3"/>
    <property type="nucleotide sequence ID" value="XM_054339238.1"/>
</dbReference>
<dbReference type="RefSeq" id="XP_054195214.1">
    <molecule id="Q6PGN9-3"/>
    <property type="nucleotide sequence ID" value="XM_054339239.1"/>
</dbReference>
<dbReference type="SMR" id="Q6PGN9"/>
<dbReference type="BioGRID" id="124224">
    <property type="interactions" value="56"/>
</dbReference>
<dbReference type="ELM" id="Q6PGN9"/>
<dbReference type="FunCoup" id="Q6PGN9">
    <property type="interactions" value="225"/>
</dbReference>
<dbReference type="IntAct" id="Q6PGN9">
    <property type="interactions" value="16"/>
</dbReference>
<dbReference type="MINT" id="Q6PGN9"/>
<dbReference type="STRING" id="9606.ENSP00000358925"/>
<dbReference type="GlyGen" id="Q6PGN9">
    <property type="glycosylation" value="2 sites, 1 O-linked glycan (1 site)"/>
</dbReference>
<dbReference type="iPTMnet" id="Q6PGN9"/>
<dbReference type="PhosphoSitePlus" id="Q6PGN9"/>
<dbReference type="BioMuta" id="PSRC1"/>
<dbReference type="DMDM" id="74737651"/>
<dbReference type="jPOST" id="Q6PGN9"/>
<dbReference type="MassIVE" id="Q6PGN9"/>
<dbReference type="PaxDb" id="9606-ENSP00000358925"/>
<dbReference type="PeptideAtlas" id="Q6PGN9"/>
<dbReference type="ProteomicsDB" id="67114">
    <molecule id="Q6PGN9-1"/>
</dbReference>
<dbReference type="ProteomicsDB" id="67115">
    <molecule id="Q6PGN9-2"/>
</dbReference>
<dbReference type="ProteomicsDB" id="67116">
    <molecule id="Q6PGN9-3"/>
</dbReference>
<dbReference type="ProteomicsDB" id="67117">
    <molecule id="Q6PGN9-4"/>
</dbReference>
<dbReference type="Pumba" id="Q6PGN9"/>
<dbReference type="Antibodypedia" id="33753">
    <property type="antibodies" value="233 antibodies from 22 providers"/>
</dbReference>
<dbReference type="DNASU" id="84722"/>
<dbReference type="Ensembl" id="ENST00000369903.6">
    <molecule id="Q6PGN9-2"/>
    <property type="protein sequence ID" value="ENSP00000358919.2"/>
    <property type="gene ID" value="ENSG00000134222.16"/>
</dbReference>
<dbReference type="Ensembl" id="ENST00000369904.7">
    <molecule id="Q6PGN9-3"/>
    <property type="protein sequence ID" value="ENSP00000358920.3"/>
    <property type="gene ID" value="ENSG00000134222.16"/>
</dbReference>
<dbReference type="Ensembl" id="ENST00000369907.7">
    <molecule id="Q6PGN9-2"/>
    <property type="protein sequence ID" value="ENSP00000358923.3"/>
    <property type="gene ID" value="ENSG00000134222.16"/>
</dbReference>
<dbReference type="Ensembl" id="ENST00000369909.7">
    <molecule id="Q6PGN9-2"/>
    <property type="protein sequence ID" value="ENSP00000358925.2"/>
    <property type="gene ID" value="ENSG00000134222.16"/>
</dbReference>
<dbReference type="Ensembl" id="ENST00000409138.6">
    <molecule id="Q6PGN9-1"/>
    <property type="protein sequence ID" value="ENSP00000474667.1"/>
    <property type="gene ID" value="ENSG00000134222.16"/>
</dbReference>
<dbReference type="Ensembl" id="ENST00000409267.5">
    <molecule id="Q6PGN9-2"/>
    <property type="protein sequence ID" value="ENSP00000386323.1"/>
    <property type="gene ID" value="ENSG00000134222.16"/>
</dbReference>
<dbReference type="GeneID" id="84722"/>
<dbReference type="KEGG" id="hsa:84722"/>
<dbReference type="MANE-Select" id="ENST00000369909.7">
    <molecule id="Q6PGN9-2"/>
    <property type="protein sequence ID" value="ENSP00000358925.2"/>
    <property type="RefSeq nucleotide sequence ID" value="NM_001032291.3"/>
    <property type="RefSeq protein sequence ID" value="NP_001027462.1"/>
</dbReference>
<dbReference type="UCSC" id="uc001dxc.4">
    <molecule id="Q6PGN9-1"/>
    <property type="organism name" value="human"/>
</dbReference>
<dbReference type="AGR" id="HGNC:24472"/>
<dbReference type="CTD" id="84722"/>
<dbReference type="DisGeNET" id="84722"/>
<dbReference type="GeneCards" id="PSRC1"/>
<dbReference type="HGNC" id="HGNC:24472">
    <property type="gene designation" value="PSRC1"/>
</dbReference>
<dbReference type="HPA" id="ENSG00000134222">
    <property type="expression patterns" value="Group enriched (brain, retina)"/>
</dbReference>
<dbReference type="MIM" id="613126">
    <property type="type" value="gene"/>
</dbReference>
<dbReference type="neXtProt" id="NX_Q6PGN9"/>
<dbReference type="OpenTargets" id="ENSG00000134222"/>
<dbReference type="PharmGKB" id="PA142671120"/>
<dbReference type="VEuPathDB" id="HostDB:ENSG00000134222"/>
<dbReference type="eggNOG" id="ENOG502S467">
    <property type="taxonomic scope" value="Eukaryota"/>
</dbReference>
<dbReference type="GeneTree" id="ENSGT00940000154189"/>
<dbReference type="HOGENOM" id="CLU_067830_0_0_1"/>
<dbReference type="InParanoid" id="Q6PGN9"/>
<dbReference type="OMA" id="FIVDETF"/>
<dbReference type="OrthoDB" id="9448335at2759"/>
<dbReference type="PAN-GO" id="Q6PGN9">
    <property type="GO annotations" value="5 GO annotations based on evolutionary models"/>
</dbReference>
<dbReference type="PhylomeDB" id="Q6PGN9"/>
<dbReference type="TreeFam" id="TF338374"/>
<dbReference type="PathwayCommons" id="Q6PGN9"/>
<dbReference type="SignaLink" id="Q6PGN9"/>
<dbReference type="BioGRID-ORCS" id="84722">
    <property type="hits" value="25 hits in 1172 CRISPR screens"/>
</dbReference>
<dbReference type="ChiTaRS" id="PSRC1">
    <property type="organism name" value="human"/>
</dbReference>
<dbReference type="GeneWiki" id="PSRC1"/>
<dbReference type="GenomeRNAi" id="84722"/>
<dbReference type="Pharos" id="Q6PGN9">
    <property type="development level" value="Tbio"/>
</dbReference>
<dbReference type="PRO" id="PR:Q6PGN9"/>
<dbReference type="Proteomes" id="UP000005640">
    <property type="component" value="Chromosome 1"/>
</dbReference>
<dbReference type="RNAct" id="Q6PGN9">
    <property type="molecule type" value="protein"/>
</dbReference>
<dbReference type="Bgee" id="ENSG00000134222">
    <property type="expression patterns" value="Expressed in C1 segment of cervical spinal cord and 146 other cell types or tissues"/>
</dbReference>
<dbReference type="ExpressionAtlas" id="Q6PGN9">
    <property type="expression patterns" value="baseline and differential"/>
</dbReference>
<dbReference type="GO" id="GO:0005737">
    <property type="term" value="C:cytoplasm"/>
    <property type="evidence" value="ECO:0000250"/>
    <property type="project" value="BHF-UCL"/>
</dbReference>
<dbReference type="GO" id="GO:0005829">
    <property type="term" value="C:cytosol"/>
    <property type="evidence" value="ECO:0000314"/>
    <property type="project" value="HPA"/>
</dbReference>
<dbReference type="GO" id="GO:0015630">
    <property type="term" value="C:microtubule cytoskeleton"/>
    <property type="evidence" value="ECO:0000250"/>
    <property type="project" value="BHF-UCL"/>
</dbReference>
<dbReference type="GO" id="GO:0030496">
    <property type="term" value="C:midbody"/>
    <property type="evidence" value="ECO:0000250"/>
    <property type="project" value="BHF-UCL"/>
</dbReference>
<dbReference type="GO" id="GO:0005654">
    <property type="term" value="C:nucleoplasm"/>
    <property type="evidence" value="ECO:0000314"/>
    <property type="project" value="HPA"/>
</dbReference>
<dbReference type="GO" id="GO:0005819">
    <property type="term" value="C:spindle"/>
    <property type="evidence" value="ECO:0000250"/>
    <property type="project" value="BHF-UCL"/>
</dbReference>
<dbReference type="GO" id="GO:0000922">
    <property type="term" value="C:spindle pole"/>
    <property type="evidence" value="ECO:0007669"/>
    <property type="project" value="UniProtKB-SubCell"/>
</dbReference>
<dbReference type="GO" id="GO:0008017">
    <property type="term" value="F:microtubule binding"/>
    <property type="evidence" value="ECO:0000250"/>
    <property type="project" value="BHF-UCL"/>
</dbReference>
<dbReference type="GO" id="GO:0051301">
    <property type="term" value="P:cell division"/>
    <property type="evidence" value="ECO:0007669"/>
    <property type="project" value="UniProtKB-KW"/>
</dbReference>
<dbReference type="GO" id="GO:0001578">
    <property type="term" value="P:microtubule bundle formation"/>
    <property type="evidence" value="ECO:0000250"/>
    <property type="project" value="BHF-UCL"/>
</dbReference>
<dbReference type="GO" id="GO:0007080">
    <property type="term" value="P:mitotic metaphase chromosome alignment"/>
    <property type="evidence" value="ECO:0000314"/>
    <property type="project" value="UniProtKB"/>
</dbReference>
<dbReference type="GO" id="GO:0030308">
    <property type="term" value="P:negative regulation of cell growth"/>
    <property type="evidence" value="ECO:0000250"/>
    <property type="project" value="BHF-UCL"/>
</dbReference>
<dbReference type="GO" id="GO:0045893">
    <property type="term" value="P:positive regulation of DNA-templated transcription"/>
    <property type="evidence" value="ECO:0000250"/>
    <property type="project" value="BHF-UCL"/>
</dbReference>
<dbReference type="GO" id="GO:0031116">
    <property type="term" value="P:positive regulation of microtubule polymerization"/>
    <property type="evidence" value="ECO:0000250"/>
    <property type="project" value="BHF-UCL"/>
</dbReference>
<dbReference type="GO" id="GO:0060236">
    <property type="term" value="P:regulation of mitotic spindle organization"/>
    <property type="evidence" value="ECO:0000314"/>
    <property type="project" value="UniProtKB"/>
</dbReference>
<dbReference type="InterPro" id="IPR026657">
    <property type="entry name" value="DDA3/GTSE-1"/>
</dbReference>
<dbReference type="InterPro" id="IPR032768">
    <property type="entry name" value="GTSE1_N"/>
</dbReference>
<dbReference type="PANTHER" id="PTHR21584">
    <property type="entry name" value="DIFFERENTIAL DISPLAY AND ACTIVATED BY P53 DDA3 /G2 S PHASE EXPRESSED 1"/>
    <property type="match status" value="1"/>
</dbReference>
<dbReference type="PANTHER" id="PTHR21584:SF1">
    <property type="entry name" value="PROLINE_SERINE-RICH COILED-COIL PROTEIN 1"/>
    <property type="match status" value="1"/>
</dbReference>
<dbReference type="Pfam" id="PF15259">
    <property type="entry name" value="GTSE1_N"/>
    <property type="match status" value="1"/>
</dbReference>
<protein>
    <recommendedName>
        <fullName>Proline/serine-rich coiled-coil protein 1</fullName>
    </recommendedName>
</protein>
<accession>Q6PGN9</accession>
<accession>Q5T2Z3</accession>
<accession>Q6ZTI8</accession>
<accession>Q71MG3</accession>
<accession>Q9BV77</accession>
<keyword id="KW-0025">Alternative splicing</keyword>
<keyword id="KW-0131">Cell cycle</keyword>
<keyword id="KW-0132">Cell division</keyword>
<keyword id="KW-0175">Coiled coil</keyword>
<keyword id="KW-0963">Cytoplasm</keyword>
<keyword id="KW-0206">Cytoskeleton</keyword>
<keyword id="KW-0498">Mitosis</keyword>
<keyword id="KW-0597">Phosphoprotein</keyword>
<keyword id="KW-1267">Proteomics identification</keyword>
<keyword id="KW-1185">Reference proteome</keyword>
<keyword id="KW-0677">Repeat</keyword>
<proteinExistence type="evidence at protein level"/>
<comment type="function">
    <text evidence="5 6 7">Required for normal progression through mitosis. Required for normal congress of chromosomes at the metaphase plate, and for normal rate of chromosomal segregation during anaphase. Plays a role in the regulation of mitotic spindle dynamics. Increases the rate of turnover of microtubules on metaphase spindles, and contributes to the generation of normal tension across sister kinetochores. Recruits KIF2A and ANKRD53 to the mitotic spindle and spindle poles. May participate in p53/TP53-regulated growth suppression.</text>
</comment>
<comment type="subunit">
    <text evidence="1 5 7">Interacts with APC2 (By similarity). Interacts with KIF2A (PubMed:18411309). Interacts with ANKRD53; recruits ANKRD53 to the spindle during mitosis (PubMed:26820536).</text>
</comment>
<comment type="interaction">
    <interactant intactId="EBI-7392664">
        <id>Q6PGN9</id>
    </interactant>
    <interactant intactId="EBI-726739">
        <id>Q9UPY8</id>
        <label>MAPRE3</label>
    </interactant>
    <organismsDiffer>false</organismsDiffer>
    <experiments>3</experiments>
</comment>
<comment type="subcellular location">
    <subcellularLocation>
        <location>Cytoplasm</location>
    </subcellularLocation>
    <subcellularLocation>
        <location>Cytoplasm</location>
        <location>Cytoskeleton</location>
        <location>Spindle</location>
    </subcellularLocation>
    <subcellularLocation>
        <location>Cytoplasm</location>
        <location>Cytoskeleton</location>
        <location>Spindle pole</location>
    </subcellularLocation>
    <text>Detected at the mitotic spindle and spindle poles. Diffusely distributed throughout the cell during interphase.</text>
</comment>
<comment type="alternative products">
    <event type="alternative splicing"/>
    <isoform>
        <id>Q6PGN9-1</id>
        <name>C</name>
        <sequence type="displayed"/>
    </isoform>
    <isoform>
        <id>Q6PGN9-2</id>
        <name>A</name>
        <sequence type="described" ref="VSP_022591"/>
    </isoform>
    <isoform>
        <id>Q6PGN9-3</id>
        <name>B</name>
        <sequence type="described" ref="VSP_022592 VSP_022593"/>
    </isoform>
    <isoform>
        <id>Q6PGN9-4</id>
        <name>D</name>
        <sequence type="described" ref="VSP_022602 VSP_022591"/>
    </isoform>
</comment>
<comment type="tissue specificity">
    <text evidence="4">Widely expressed in adult and fetal tissues, with highest expression in the adult brain and fetal thymus. Not detected in adult skeletal muscle.</text>
</comment>
<comment type="PTM">
    <text evidence="5">Phosphorylated during mitosis.</text>
</comment>
<comment type="similarity">
    <text evidence="11">Belongs to the PSRC1 family.</text>
</comment>